<protein>
    <recommendedName>
        <fullName evidence="1">Amino-acid acetyltransferase</fullName>
        <ecNumber evidence="1">2.3.1.1</ecNumber>
    </recommendedName>
    <alternativeName>
        <fullName evidence="1">N-acetylglutamate synthase</fullName>
        <shortName evidence="1">AGS</shortName>
        <shortName evidence="1">NAGS</shortName>
    </alternativeName>
</protein>
<organism>
    <name type="scientific">Yersinia pseudotuberculosis serotype I (strain IP32953)</name>
    <dbReference type="NCBI Taxonomy" id="273123"/>
    <lineage>
        <taxon>Bacteria</taxon>
        <taxon>Pseudomonadati</taxon>
        <taxon>Pseudomonadota</taxon>
        <taxon>Gammaproteobacteria</taxon>
        <taxon>Enterobacterales</taxon>
        <taxon>Yersiniaceae</taxon>
        <taxon>Yersinia</taxon>
    </lineage>
</organism>
<reference key="1">
    <citation type="journal article" date="2004" name="Proc. Natl. Acad. Sci. U.S.A.">
        <title>Insights into the evolution of Yersinia pestis through whole-genome comparison with Yersinia pseudotuberculosis.</title>
        <authorList>
            <person name="Chain P.S.G."/>
            <person name="Carniel E."/>
            <person name="Larimer F.W."/>
            <person name="Lamerdin J."/>
            <person name="Stoutland P.O."/>
            <person name="Regala W.M."/>
            <person name="Georgescu A.M."/>
            <person name="Vergez L.M."/>
            <person name="Land M.L."/>
            <person name="Motin V.L."/>
            <person name="Brubaker R.R."/>
            <person name="Fowler J."/>
            <person name="Hinnebusch J."/>
            <person name="Marceau M."/>
            <person name="Medigue C."/>
            <person name="Simonet M."/>
            <person name="Chenal-Francisque V."/>
            <person name="Souza B."/>
            <person name="Dacheux D."/>
            <person name="Elliott J.M."/>
            <person name="Derbise A."/>
            <person name="Hauser L.J."/>
            <person name="Garcia E."/>
        </authorList>
    </citation>
    <scope>NUCLEOTIDE SEQUENCE [LARGE SCALE GENOMIC DNA]</scope>
    <source>
        <strain>IP32953</strain>
    </source>
</reference>
<comment type="catalytic activity">
    <reaction evidence="1">
        <text>L-glutamate + acetyl-CoA = N-acetyl-L-glutamate + CoA + H(+)</text>
        <dbReference type="Rhea" id="RHEA:24292"/>
        <dbReference type="ChEBI" id="CHEBI:15378"/>
        <dbReference type="ChEBI" id="CHEBI:29985"/>
        <dbReference type="ChEBI" id="CHEBI:44337"/>
        <dbReference type="ChEBI" id="CHEBI:57287"/>
        <dbReference type="ChEBI" id="CHEBI:57288"/>
        <dbReference type="EC" id="2.3.1.1"/>
    </reaction>
</comment>
<comment type="pathway">
    <text evidence="1">Amino-acid biosynthesis; L-arginine biosynthesis; N(2)-acetyl-L-ornithine from L-glutamate: step 1/4.</text>
</comment>
<comment type="subunit">
    <text evidence="1">Homohexamer.</text>
</comment>
<comment type="subcellular location">
    <subcellularLocation>
        <location evidence="1">Cytoplasm</location>
    </subcellularLocation>
</comment>
<comment type="similarity">
    <text evidence="1">Belongs to the acetyltransferase family. ArgA subfamily.</text>
</comment>
<gene>
    <name evidence="1" type="primary">argA</name>
    <name type="ordered locus">YPTB3023</name>
</gene>
<keyword id="KW-0012">Acyltransferase</keyword>
<keyword id="KW-0028">Amino-acid biosynthesis</keyword>
<keyword id="KW-0055">Arginine biosynthesis</keyword>
<keyword id="KW-0963">Cytoplasm</keyword>
<keyword id="KW-0808">Transferase</keyword>
<evidence type="ECO:0000255" key="1">
    <source>
        <dbReference type="HAMAP-Rule" id="MF_01105"/>
    </source>
</evidence>
<sequence>MKERSTELVQGFRHSVPYINAHRGKTFVVMLGGEAIEHENFSSIVNDIGLLHSLGIRLVVVYGARPQIDSNLADHNYEPIYHKHTRVTDARTLEMVKQAAGLLQLDITARLSMSLNNTPLQGAHINVVSGNFIIAQPLGVDDGVDYCHSGRIRRIDEEAIHRQLDNGAIVLLGPVAVSVTGESFNLTSEEVATQLAIKLKAEKMIGFCSSQGVTDSEGNIISELFPNDAQKRIEDLEQDGDYNSGTVRFLRGAVKACRSGVRRSHLLSYQEDGALIQELFSRDGIGTQIVMESAEQVRRATINDIGGILELIRPLEQQGILVRRSREQLEMEIDKFTIIERDNLTIACAALYPFPDEHIGEMACVAVHPDYRSSSRGEMLLNRITNQARQMGLKKLFVLTTRSIHWFQERGFTPAEVDVLPIQKQELYNYQRRSKILLADL</sequence>
<name>ARGA_YERPS</name>
<accession>Q667G9</accession>
<proteinExistence type="inferred from homology"/>
<feature type="chain" id="PRO_1000084828" description="Amino-acid acetyltransferase">
    <location>
        <begin position="1"/>
        <end position="441"/>
    </location>
</feature>
<feature type="domain" description="N-acetyltransferase" evidence="1">
    <location>
        <begin position="295"/>
        <end position="434"/>
    </location>
</feature>
<dbReference type="EC" id="2.3.1.1" evidence="1"/>
<dbReference type="EMBL" id="BX936398">
    <property type="protein sequence ID" value="CAH22261.1"/>
    <property type="molecule type" value="Genomic_DNA"/>
</dbReference>
<dbReference type="RefSeq" id="WP_002211624.1">
    <property type="nucleotide sequence ID" value="NZ_CP009712.1"/>
</dbReference>
<dbReference type="SMR" id="Q667G9"/>
<dbReference type="GeneID" id="96662393"/>
<dbReference type="KEGG" id="ypo:BZ17_3594"/>
<dbReference type="KEGG" id="yps:YPTB3023"/>
<dbReference type="PATRIC" id="fig|273123.14.peg.3777"/>
<dbReference type="UniPathway" id="UPA00068">
    <property type="reaction ID" value="UER00106"/>
</dbReference>
<dbReference type="Proteomes" id="UP000001011">
    <property type="component" value="Chromosome"/>
</dbReference>
<dbReference type="GO" id="GO:0005737">
    <property type="term" value="C:cytoplasm"/>
    <property type="evidence" value="ECO:0007669"/>
    <property type="project" value="UniProtKB-SubCell"/>
</dbReference>
<dbReference type="GO" id="GO:0004042">
    <property type="term" value="F:L-glutamate N-acetyltransferase activity"/>
    <property type="evidence" value="ECO:0007669"/>
    <property type="project" value="UniProtKB-UniRule"/>
</dbReference>
<dbReference type="GO" id="GO:0006526">
    <property type="term" value="P:L-arginine biosynthetic process"/>
    <property type="evidence" value="ECO:0007669"/>
    <property type="project" value="UniProtKB-UniRule"/>
</dbReference>
<dbReference type="CDD" id="cd04237">
    <property type="entry name" value="AAK_NAGS-ABP"/>
    <property type="match status" value="1"/>
</dbReference>
<dbReference type="CDD" id="cd04301">
    <property type="entry name" value="NAT_SF"/>
    <property type="match status" value="1"/>
</dbReference>
<dbReference type="FunFam" id="3.40.1160.10:FF:000005">
    <property type="entry name" value="Amino-acid acetyltransferase"/>
    <property type="match status" value="1"/>
</dbReference>
<dbReference type="FunFam" id="3.40.630.30:FF:000009">
    <property type="entry name" value="Amino-acid acetyltransferase"/>
    <property type="match status" value="1"/>
</dbReference>
<dbReference type="Gene3D" id="3.40.630.30">
    <property type="match status" value="1"/>
</dbReference>
<dbReference type="Gene3D" id="3.40.1160.10">
    <property type="entry name" value="Acetylglutamate kinase-like"/>
    <property type="match status" value="1"/>
</dbReference>
<dbReference type="HAMAP" id="MF_01105">
    <property type="entry name" value="N_acetyl_glu_synth"/>
    <property type="match status" value="1"/>
</dbReference>
<dbReference type="InterPro" id="IPR036393">
    <property type="entry name" value="AceGlu_kinase-like_sf"/>
</dbReference>
<dbReference type="InterPro" id="IPR016181">
    <property type="entry name" value="Acyl_CoA_acyltransferase"/>
</dbReference>
<dbReference type="InterPro" id="IPR001048">
    <property type="entry name" value="Asp/Glu/Uridylate_kinase"/>
</dbReference>
<dbReference type="InterPro" id="IPR000182">
    <property type="entry name" value="GNAT_dom"/>
</dbReference>
<dbReference type="InterPro" id="IPR033719">
    <property type="entry name" value="NAGS_kin"/>
</dbReference>
<dbReference type="InterPro" id="IPR010167">
    <property type="entry name" value="NH2A_AcTrfase"/>
</dbReference>
<dbReference type="NCBIfam" id="TIGR01890">
    <property type="entry name" value="N-Ac-Glu-synth"/>
    <property type="match status" value="1"/>
</dbReference>
<dbReference type="NCBIfam" id="NF003641">
    <property type="entry name" value="PRK05279.1"/>
    <property type="match status" value="1"/>
</dbReference>
<dbReference type="PANTHER" id="PTHR30602">
    <property type="entry name" value="AMINO-ACID ACETYLTRANSFERASE"/>
    <property type="match status" value="1"/>
</dbReference>
<dbReference type="PANTHER" id="PTHR30602:SF12">
    <property type="entry name" value="AMINO-ACID ACETYLTRANSFERASE NAGS1, CHLOROPLASTIC-RELATED"/>
    <property type="match status" value="1"/>
</dbReference>
<dbReference type="Pfam" id="PF00696">
    <property type="entry name" value="AA_kinase"/>
    <property type="match status" value="1"/>
</dbReference>
<dbReference type="Pfam" id="PF00583">
    <property type="entry name" value="Acetyltransf_1"/>
    <property type="match status" value="1"/>
</dbReference>
<dbReference type="PIRSF" id="PIRSF000423">
    <property type="entry name" value="ArgA"/>
    <property type="match status" value="1"/>
</dbReference>
<dbReference type="SUPFAM" id="SSF55729">
    <property type="entry name" value="Acyl-CoA N-acyltransferases (Nat)"/>
    <property type="match status" value="1"/>
</dbReference>
<dbReference type="SUPFAM" id="SSF53633">
    <property type="entry name" value="Carbamate kinase-like"/>
    <property type="match status" value="1"/>
</dbReference>
<dbReference type="PROSITE" id="PS51186">
    <property type="entry name" value="GNAT"/>
    <property type="match status" value="1"/>
</dbReference>